<protein>
    <recommendedName>
        <fullName evidence="1">Probable GTP 3',8-cyclase</fullName>
        <ecNumber evidence="1">4.1.99.22</ecNumber>
    </recommendedName>
    <alternativeName>
        <fullName evidence="1">Molybdenum cofactor biosynthesis protein A</fullName>
    </alternativeName>
</protein>
<sequence length="298" mass="34339">MEDRYGREIRSFRLSITPKCNLKCFYCHKEGRNEEHGKLMSADEIGKIVKSSLEFGVRKIKISGGEPLLRTDLPEIIENIKDEQIKDISLTTNGILLEKYAQKLKDAGLDRVNVSLDTLNPEQYKKITVGGNIESVKKGIEKAIEVGLTPLKVNFLAMDCTVNQLPAIMDYCRKIGAILQIIEFIPMEPELKHHHIDVVPIEEEIAKSADQVFTRKFMQNRKKYLIDGLEVEFVRPMDNTEFCEHCTRIRLTYDGYLKPCLLRDDNLVDVVNPVRNGEDTRKYFIKCIEEREPFCKAQ</sequence>
<reference key="1">
    <citation type="submission" date="2007-03" db="EMBL/GenBank/DDBJ databases">
        <title>Complete sequence of chromosome of Methanococcus maripaludis C5.</title>
        <authorList>
            <consortium name="US DOE Joint Genome Institute"/>
            <person name="Copeland A."/>
            <person name="Lucas S."/>
            <person name="Lapidus A."/>
            <person name="Barry K."/>
            <person name="Glavina del Rio T."/>
            <person name="Dalin E."/>
            <person name="Tice H."/>
            <person name="Pitluck S."/>
            <person name="Chertkov O."/>
            <person name="Brettin T."/>
            <person name="Bruce D."/>
            <person name="Han C."/>
            <person name="Detter J.C."/>
            <person name="Schmutz J."/>
            <person name="Larimer F."/>
            <person name="Land M."/>
            <person name="Hauser L."/>
            <person name="Kyrpides N."/>
            <person name="Mikhailova N."/>
            <person name="Sieprawska-Lupa M."/>
            <person name="Whitman W.B."/>
            <person name="Richardson P."/>
        </authorList>
    </citation>
    <scope>NUCLEOTIDE SEQUENCE [LARGE SCALE GENOMIC DNA]</scope>
    <source>
        <strain>C5 / ATCC BAA-1333</strain>
    </source>
</reference>
<comment type="function">
    <text evidence="1">Catalyzes the cyclization of GTP to (8S)-3',8-cyclo-7,8-dihydroguanosine 5'-triphosphate.</text>
</comment>
<comment type="catalytic activity">
    <reaction evidence="1">
        <text>GTP + AH2 + S-adenosyl-L-methionine = (8S)-3',8-cyclo-7,8-dihydroguanosine 5'-triphosphate + 5'-deoxyadenosine + L-methionine + A + H(+)</text>
        <dbReference type="Rhea" id="RHEA:49576"/>
        <dbReference type="ChEBI" id="CHEBI:13193"/>
        <dbReference type="ChEBI" id="CHEBI:15378"/>
        <dbReference type="ChEBI" id="CHEBI:17319"/>
        <dbReference type="ChEBI" id="CHEBI:17499"/>
        <dbReference type="ChEBI" id="CHEBI:37565"/>
        <dbReference type="ChEBI" id="CHEBI:57844"/>
        <dbReference type="ChEBI" id="CHEBI:59789"/>
        <dbReference type="ChEBI" id="CHEBI:131766"/>
        <dbReference type="EC" id="4.1.99.22"/>
    </reaction>
</comment>
<comment type="cofactor">
    <cofactor evidence="1">
        <name>[4Fe-4S] cluster</name>
        <dbReference type="ChEBI" id="CHEBI:49883"/>
    </cofactor>
    <text evidence="1">Binds 2 [4Fe-4S] clusters. Binds 1 [4Fe-4S] cluster coordinated with 3 cysteines and an exchangeable S-adenosyl-L-methionine and 1 [4Fe-4S] cluster coordinated with 3 cysteines and the GTP-derived substrate.</text>
</comment>
<comment type="pathway">
    <text evidence="1">Cofactor biosynthesis; molybdopterin biosynthesis.</text>
</comment>
<comment type="similarity">
    <text evidence="1">Belongs to the radical SAM superfamily. MoaA family.</text>
</comment>
<name>MOAA_METM5</name>
<accession>A4FYQ8</accession>
<organism>
    <name type="scientific">Methanococcus maripaludis (strain C5 / ATCC BAA-1333)</name>
    <dbReference type="NCBI Taxonomy" id="402880"/>
    <lineage>
        <taxon>Archaea</taxon>
        <taxon>Methanobacteriati</taxon>
        <taxon>Methanobacteriota</taxon>
        <taxon>Methanomada group</taxon>
        <taxon>Methanococci</taxon>
        <taxon>Methanococcales</taxon>
        <taxon>Methanococcaceae</taxon>
        <taxon>Methanococcus</taxon>
    </lineage>
</organism>
<feature type="chain" id="PRO_1000085698" description="Probable GTP 3',8-cyclase">
    <location>
        <begin position="1"/>
        <end position="298"/>
    </location>
</feature>
<feature type="domain" description="Radical SAM core" evidence="2">
    <location>
        <begin position="4"/>
        <end position="227"/>
    </location>
</feature>
<feature type="binding site" evidence="1">
    <location>
        <position position="13"/>
    </location>
    <ligand>
        <name>GTP</name>
        <dbReference type="ChEBI" id="CHEBI:37565"/>
    </ligand>
</feature>
<feature type="binding site" evidence="1">
    <location>
        <position position="20"/>
    </location>
    <ligand>
        <name>[4Fe-4S] cluster</name>
        <dbReference type="ChEBI" id="CHEBI:49883"/>
        <label>1</label>
        <note>4Fe-4S-S-AdoMet</note>
    </ligand>
</feature>
<feature type="binding site" evidence="1">
    <location>
        <position position="24"/>
    </location>
    <ligand>
        <name>[4Fe-4S] cluster</name>
        <dbReference type="ChEBI" id="CHEBI:49883"/>
        <label>1</label>
        <note>4Fe-4S-S-AdoMet</note>
    </ligand>
</feature>
<feature type="binding site" evidence="1">
    <location>
        <position position="26"/>
    </location>
    <ligand>
        <name>S-adenosyl-L-methionine</name>
        <dbReference type="ChEBI" id="CHEBI:59789"/>
    </ligand>
</feature>
<feature type="binding site" evidence="1">
    <location>
        <position position="27"/>
    </location>
    <ligand>
        <name>[4Fe-4S] cluster</name>
        <dbReference type="ChEBI" id="CHEBI:49883"/>
        <label>1</label>
        <note>4Fe-4S-S-AdoMet</note>
    </ligand>
</feature>
<feature type="binding site" evidence="1">
    <location>
        <position position="61"/>
    </location>
    <ligand>
        <name>GTP</name>
        <dbReference type="ChEBI" id="CHEBI:37565"/>
    </ligand>
</feature>
<feature type="binding site" evidence="1">
    <location>
        <position position="65"/>
    </location>
    <ligand>
        <name>S-adenosyl-L-methionine</name>
        <dbReference type="ChEBI" id="CHEBI:59789"/>
    </ligand>
</feature>
<feature type="binding site" evidence="1">
    <location>
        <position position="91"/>
    </location>
    <ligand>
        <name>GTP</name>
        <dbReference type="ChEBI" id="CHEBI:37565"/>
    </ligand>
</feature>
<feature type="binding site" evidence="1">
    <location>
        <position position="115"/>
    </location>
    <ligand>
        <name>S-adenosyl-L-methionine</name>
        <dbReference type="ChEBI" id="CHEBI:59789"/>
    </ligand>
</feature>
<feature type="binding site" evidence="1">
    <location>
        <position position="152"/>
    </location>
    <ligand>
        <name>GTP</name>
        <dbReference type="ChEBI" id="CHEBI:37565"/>
    </ligand>
</feature>
<feature type="binding site" evidence="1">
    <location>
        <position position="243"/>
    </location>
    <ligand>
        <name>[4Fe-4S] cluster</name>
        <dbReference type="ChEBI" id="CHEBI:49883"/>
        <label>2</label>
        <note>4Fe-4S-substrate</note>
    </ligand>
</feature>
<feature type="binding site" evidence="1">
    <location>
        <position position="246"/>
    </location>
    <ligand>
        <name>[4Fe-4S] cluster</name>
        <dbReference type="ChEBI" id="CHEBI:49883"/>
        <label>2</label>
        <note>4Fe-4S-substrate</note>
    </ligand>
</feature>
<feature type="binding site" evidence="1">
    <location>
        <begin position="248"/>
        <end position="250"/>
    </location>
    <ligand>
        <name>GTP</name>
        <dbReference type="ChEBI" id="CHEBI:37565"/>
    </ligand>
</feature>
<feature type="binding site" evidence="1">
    <location>
        <position position="260"/>
    </location>
    <ligand>
        <name>[4Fe-4S] cluster</name>
        <dbReference type="ChEBI" id="CHEBI:49883"/>
        <label>2</label>
        <note>4Fe-4S-substrate</note>
    </ligand>
</feature>
<evidence type="ECO:0000255" key="1">
    <source>
        <dbReference type="HAMAP-Rule" id="MF_01225"/>
    </source>
</evidence>
<evidence type="ECO:0000255" key="2">
    <source>
        <dbReference type="PROSITE-ProRule" id="PRU01266"/>
    </source>
</evidence>
<dbReference type="EC" id="4.1.99.22" evidence="1"/>
<dbReference type="EMBL" id="CP000609">
    <property type="protein sequence ID" value="ABO35342.1"/>
    <property type="molecule type" value="Genomic_DNA"/>
</dbReference>
<dbReference type="RefSeq" id="WP_011868795.1">
    <property type="nucleotide sequence ID" value="NC_009135.1"/>
</dbReference>
<dbReference type="SMR" id="A4FYQ8"/>
<dbReference type="STRING" id="402880.MmarC5_1036"/>
<dbReference type="GeneID" id="4928757"/>
<dbReference type="KEGG" id="mmq:MmarC5_1036"/>
<dbReference type="eggNOG" id="arCOG00930">
    <property type="taxonomic scope" value="Archaea"/>
</dbReference>
<dbReference type="HOGENOM" id="CLU_009273_0_1_2"/>
<dbReference type="OrthoDB" id="6925at2157"/>
<dbReference type="UniPathway" id="UPA00344"/>
<dbReference type="Proteomes" id="UP000000253">
    <property type="component" value="Chromosome"/>
</dbReference>
<dbReference type="GO" id="GO:0051539">
    <property type="term" value="F:4 iron, 4 sulfur cluster binding"/>
    <property type="evidence" value="ECO:0007669"/>
    <property type="project" value="UniProtKB-UniRule"/>
</dbReference>
<dbReference type="GO" id="GO:0061799">
    <property type="term" value="F:cyclic pyranopterin monophosphate synthase activity"/>
    <property type="evidence" value="ECO:0007669"/>
    <property type="project" value="TreeGrafter"/>
</dbReference>
<dbReference type="GO" id="GO:0061798">
    <property type="term" value="F:GTP 3',8'-cyclase activity"/>
    <property type="evidence" value="ECO:0007669"/>
    <property type="project" value="UniProtKB-UniRule"/>
</dbReference>
<dbReference type="GO" id="GO:0005525">
    <property type="term" value="F:GTP binding"/>
    <property type="evidence" value="ECO:0007669"/>
    <property type="project" value="UniProtKB-UniRule"/>
</dbReference>
<dbReference type="GO" id="GO:0046872">
    <property type="term" value="F:metal ion binding"/>
    <property type="evidence" value="ECO:0007669"/>
    <property type="project" value="UniProtKB-KW"/>
</dbReference>
<dbReference type="GO" id="GO:1904047">
    <property type="term" value="F:S-adenosyl-L-methionine binding"/>
    <property type="evidence" value="ECO:0007669"/>
    <property type="project" value="UniProtKB-UniRule"/>
</dbReference>
<dbReference type="GO" id="GO:0006777">
    <property type="term" value="P:Mo-molybdopterin cofactor biosynthetic process"/>
    <property type="evidence" value="ECO:0007669"/>
    <property type="project" value="UniProtKB-UniRule"/>
</dbReference>
<dbReference type="CDD" id="cd01335">
    <property type="entry name" value="Radical_SAM"/>
    <property type="match status" value="1"/>
</dbReference>
<dbReference type="Gene3D" id="3.20.20.70">
    <property type="entry name" value="Aldolase class I"/>
    <property type="match status" value="1"/>
</dbReference>
<dbReference type="HAMAP" id="MF_01225_A">
    <property type="entry name" value="MoaA_A"/>
    <property type="match status" value="1"/>
</dbReference>
<dbReference type="InterPro" id="IPR013785">
    <property type="entry name" value="Aldolase_TIM"/>
</dbReference>
<dbReference type="InterPro" id="IPR006638">
    <property type="entry name" value="Elp3/MiaA/NifB-like_rSAM"/>
</dbReference>
<dbReference type="InterPro" id="IPR013485">
    <property type="entry name" value="MoaA_arc"/>
</dbReference>
<dbReference type="InterPro" id="IPR010505">
    <property type="entry name" value="MoaA_twitch"/>
</dbReference>
<dbReference type="InterPro" id="IPR050105">
    <property type="entry name" value="MoCo_biosynth_MoaA/MoaC"/>
</dbReference>
<dbReference type="InterPro" id="IPR007197">
    <property type="entry name" value="rSAM"/>
</dbReference>
<dbReference type="NCBIfam" id="TIGR02668">
    <property type="entry name" value="moaA_archaeal"/>
    <property type="match status" value="1"/>
</dbReference>
<dbReference type="NCBIfam" id="NF001199">
    <property type="entry name" value="PRK00164.2-1"/>
    <property type="match status" value="1"/>
</dbReference>
<dbReference type="PANTHER" id="PTHR22960:SF0">
    <property type="entry name" value="MOLYBDENUM COFACTOR BIOSYNTHESIS PROTEIN 1"/>
    <property type="match status" value="1"/>
</dbReference>
<dbReference type="PANTHER" id="PTHR22960">
    <property type="entry name" value="MOLYBDOPTERIN COFACTOR SYNTHESIS PROTEIN A"/>
    <property type="match status" value="1"/>
</dbReference>
<dbReference type="Pfam" id="PF13353">
    <property type="entry name" value="Fer4_12"/>
    <property type="match status" value="1"/>
</dbReference>
<dbReference type="Pfam" id="PF06463">
    <property type="entry name" value="Mob_synth_C"/>
    <property type="match status" value="1"/>
</dbReference>
<dbReference type="Pfam" id="PF04055">
    <property type="entry name" value="Radical_SAM"/>
    <property type="match status" value="1"/>
</dbReference>
<dbReference type="SFLD" id="SFLDG01383">
    <property type="entry name" value="cyclic_pyranopterin_phosphate"/>
    <property type="match status" value="1"/>
</dbReference>
<dbReference type="SFLD" id="SFLDS00029">
    <property type="entry name" value="Radical_SAM"/>
    <property type="match status" value="1"/>
</dbReference>
<dbReference type="SMART" id="SM00729">
    <property type="entry name" value="Elp3"/>
    <property type="match status" value="1"/>
</dbReference>
<dbReference type="SUPFAM" id="SSF102114">
    <property type="entry name" value="Radical SAM enzymes"/>
    <property type="match status" value="1"/>
</dbReference>
<dbReference type="PROSITE" id="PS51918">
    <property type="entry name" value="RADICAL_SAM"/>
    <property type="match status" value="1"/>
</dbReference>
<proteinExistence type="inferred from homology"/>
<keyword id="KW-0004">4Fe-4S</keyword>
<keyword id="KW-0342">GTP-binding</keyword>
<keyword id="KW-0408">Iron</keyword>
<keyword id="KW-0411">Iron-sulfur</keyword>
<keyword id="KW-0456">Lyase</keyword>
<keyword id="KW-0479">Metal-binding</keyword>
<keyword id="KW-0501">Molybdenum cofactor biosynthesis</keyword>
<keyword id="KW-0547">Nucleotide-binding</keyword>
<keyword id="KW-0949">S-adenosyl-L-methionine</keyword>
<gene>
    <name evidence="1" type="primary">moaA</name>
    <name type="ordered locus">MmarC5_1036</name>
</gene>